<proteinExistence type="evidence at protein level"/>
<feature type="signal peptide" evidence="3">
    <location>
        <begin position="1"/>
        <end position="19"/>
    </location>
</feature>
<feature type="propeptide" id="PRO_0000461201" evidence="7">
    <location>
        <begin position="20"/>
        <end position="34"/>
    </location>
</feature>
<feature type="chain" id="PRO_5016939039" description="Sulditoxin subunit B">
    <location>
        <begin position="35"/>
        <end position="111"/>
    </location>
</feature>
<feature type="modified residue" description="Pyrrolidone carboxylic acid" evidence="2">
    <location>
        <position position="35"/>
    </location>
</feature>
<feature type="disulfide bond" evidence="2">
    <location>
        <begin position="44"/>
        <end position="68"/>
    </location>
</feature>
<feature type="disulfide bond" evidence="2">
    <location>
        <begin position="47"/>
        <end position="55"/>
    </location>
</feature>
<feature type="disulfide bond" description="Interchain (with C-78 in Sulditoxin subunit A)" evidence="2">
    <location>
        <position position="52"/>
    </location>
</feature>
<feature type="disulfide bond" evidence="2">
    <location>
        <begin position="61"/>
        <end position="87"/>
    </location>
</feature>
<feature type="disulfide bond" evidence="2">
    <location>
        <begin position="91"/>
        <end position="102"/>
    </location>
</feature>
<feature type="disulfide bond" evidence="2">
    <location>
        <begin position="103"/>
        <end position="108"/>
    </location>
</feature>
<sequence>MKTLLLALAVVVLVCLGSANELGLGRQQIDRGRRQAIGPPYGICYQCNRKSCRDCFNPKRCPSYHTMCYTLYKPNENGAEEWAVKGCARKCPTAGPNERVNCCRGRDCNND</sequence>
<keyword id="KW-0008">Acetylcholine receptor inhibiting toxin</keyword>
<keyword id="KW-1015">Disulfide bond</keyword>
<keyword id="KW-0528">Neurotoxin</keyword>
<keyword id="KW-0629">Postsynaptic neurotoxin</keyword>
<keyword id="KW-0873">Pyrrolidone carboxylic acid</keyword>
<keyword id="KW-0964">Secreted</keyword>
<keyword id="KW-0732">Signal</keyword>
<keyword id="KW-0800">Toxin</keyword>
<name>3NBB_SPISL</name>
<evidence type="ECO:0000250" key="1">
    <source>
        <dbReference type="UniProtKB" id="A0S864"/>
    </source>
</evidence>
<evidence type="ECO:0000250" key="2">
    <source>
        <dbReference type="UniProtKB" id="A0S865"/>
    </source>
</evidence>
<evidence type="ECO:0000255" key="3"/>
<evidence type="ECO:0000269" key="4">
    <source>
    </source>
</evidence>
<evidence type="ECO:0000303" key="5">
    <source>
    </source>
</evidence>
<evidence type="ECO:0000303" key="6">
    <source>
    </source>
</evidence>
<evidence type="ECO:0000305" key="7"/>
<evidence type="ECO:0000312" key="8">
    <source>
        <dbReference type="EMBL" id="AXL95296.1"/>
    </source>
</evidence>
<organism>
    <name type="scientific">Spilotes sulphureus</name>
    <name type="common">Amazon puffing snake</name>
    <name type="synonym">Natrix sulphurea</name>
    <dbReference type="NCBI Taxonomy" id="1899469"/>
    <lineage>
        <taxon>Eukaryota</taxon>
        <taxon>Metazoa</taxon>
        <taxon>Chordata</taxon>
        <taxon>Craniata</taxon>
        <taxon>Vertebrata</taxon>
        <taxon>Euteleostomi</taxon>
        <taxon>Lepidosauria</taxon>
        <taxon>Squamata</taxon>
        <taxon>Bifurcata</taxon>
        <taxon>Unidentata</taxon>
        <taxon>Episquamata</taxon>
        <taxon>Toxicofera</taxon>
        <taxon>Serpentes</taxon>
        <taxon>Colubroidea</taxon>
        <taxon>Colubridae</taxon>
        <taxon>Colubrinae</taxon>
        <taxon>Spilotes</taxon>
    </lineage>
</organism>
<accession>A0A346CIB3</accession>
<dbReference type="EMBL" id="MH233113">
    <property type="protein sequence ID" value="AXL95296.1"/>
    <property type="molecule type" value="mRNA"/>
</dbReference>
<dbReference type="SMR" id="A0A346CIB3"/>
<dbReference type="GO" id="GO:0005576">
    <property type="term" value="C:extracellular region"/>
    <property type="evidence" value="ECO:0007669"/>
    <property type="project" value="UniProtKB-SubCell"/>
</dbReference>
<dbReference type="GO" id="GO:0030550">
    <property type="term" value="F:acetylcholine receptor inhibitor activity"/>
    <property type="evidence" value="ECO:0007669"/>
    <property type="project" value="UniProtKB-KW"/>
</dbReference>
<dbReference type="GO" id="GO:0090729">
    <property type="term" value="F:toxin activity"/>
    <property type="evidence" value="ECO:0007669"/>
    <property type="project" value="UniProtKB-KW"/>
</dbReference>
<dbReference type="CDD" id="cd00206">
    <property type="entry name" value="TFP_snake_toxin"/>
    <property type="match status" value="1"/>
</dbReference>
<dbReference type="Gene3D" id="2.10.60.10">
    <property type="entry name" value="CD59"/>
    <property type="match status" value="1"/>
</dbReference>
<dbReference type="InterPro" id="IPR003571">
    <property type="entry name" value="Snake_3FTx"/>
</dbReference>
<dbReference type="InterPro" id="IPR045860">
    <property type="entry name" value="Snake_toxin-like_sf"/>
</dbReference>
<dbReference type="InterPro" id="IPR054131">
    <property type="entry name" value="Toxin_cobra-type"/>
</dbReference>
<dbReference type="Pfam" id="PF21947">
    <property type="entry name" value="Toxin_cobra-type"/>
    <property type="match status" value="1"/>
</dbReference>
<dbReference type="SUPFAM" id="SSF57302">
    <property type="entry name" value="Snake toxin-like"/>
    <property type="match status" value="1"/>
</dbReference>
<comment type="function">
    <text evidence="1 4">Reptile-specific neurotoxin (tested on geckos) (PubMed:30068680). Inhibits nicotinic acetylcholine receptor (nAChR) (By similarity). Not toxic to mammals (tested on mice) (PubMed:30068680).</text>
</comment>
<comment type="subunit">
    <text evidence="4 7">Heterodimer of sulditoxin subunits A and B; probably disulfide-linked.</text>
</comment>
<comment type="subcellular location">
    <subcellularLocation>
        <location evidence="4">Secreted</location>
    </subcellularLocation>
</comment>
<comment type="tissue specificity">
    <text evidence="1">Expressed by the venom gland.</text>
</comment>
<comment type="toxic dose">
    <text evidence="4">LD(50) is 0.22 mg/kg by intraperitoneal injection in lizards (tested on geckos).</text>
</comment>
<comment type="similarity">
    <text evidence="7">Belongs to the three-finger toxin family. Ancestral subfamily. Boigatoxin sub-subfamily.</text>
</comment>
<reference evidence="8" key="1">
    <citation type="journal article" date="2018" name="Proc. R. Soc. B">
        <title>Adaptive evolution of distinct prey-specific toxin genes in rear-fanged snake venom.</title>
        <authorList>
            <person name="Modahl C.M."/>
            <person name="Mrinalini F.S."/>
            <person name="Mackessy S.P."/>
        </authorList>
    </citation>
    <scope>NUCLEOTIDE SEQUENCE [MRNA]</scope>
    <scope>FUNCTION</scope>
    <scope>SUBCELLULAR LOCATION</scope>
    <scope>SUBUNIT</scope>
    <scope>TOXIC DOSE</scope>
    <scope>BIOASSAY</scope>
    <source>
        <tissue>Venom</tissue>
        <tissue>Venom gland</tissue>
    </source>
</reference>
<reference key="2">
    <citation type="journal article" date="2018" name="Proc. R. Soc. B">
        <authorList>
            <person name="Modahl C.M."/>
            <person name="Mrinalini F.S."/>
            <person name="Mackessy S.P."/>
        </authorList>
    </citation>
    <scope>ERRATUM OF PUBMED:30068680</scope>
</reference>
<protein>
    <recommendedName>
        <fullName evidence="6">Sulditoxin subunit B</fullName>
    </recommendedName>
    <alternativeName>
        <fullName evidence="5">S.sulphureus dimeric toxin</fullName>
    </alternativeName>
    <alternativeName>
        <fullName evidence="8">Three-finger toxin subunit A</fullName>
    </alternativeName>
</protein>